<proteinExistence type="inferred from homology"/>
<evidence type="ECO:0000250" key="1">
    <source>
        <dbReference type="UniProtKB" id="P03901"/>
    </source>
</evidence>
<evidence type="ECO:0000250" key="2">
    <source>
        <dbReference type="UniProtKB" id="P03902"/>
    </source>
</evidence>
<evidence type="ECO:0000255" key="3"/>
<evidence type="ECO:0000305" key="4"/>
<dbReference type="EC" id="7.1.1.2"/>
<dbReference type="EMBL" id="AF348082">
    <property type="protein sequence ID" value="AAK71107.1"/>
    <property type="molecule type" value="Genomic_DNA"/>
</dbReference>
<dbReference type="SMR" id="Q953H3"/>
<dbReference type="CTD" id="4539"/>
<dbReference type="GO" id="GO:0005743">
    <property type="term" value="C:mitochondrial inner membrane"/>
    <property type="evidence" value="ECO:0000250"/>
    <property type="project" value="UniProtKB"/>
</dbReference>
<dbReference type="GO" id="GO:0045271">
    <property type="term" value="C:respiratory chain complex I"/>
    <property type="evidence" value="ECO:0000250"/>
    <property type="project" value="UniProtKB"/>
</dbReference>
<dbReference type="GO" id="GO:0008137">
    <property type="term" value="F:NADH dehydrogenase (ubiquinone) activity"/>
    <property type="evidence" value="ECO:0000250"/>
    <property type="project" value="UniProtKB"/>
</dbReference>
<dbReference type="GO" id="GO:0042773">
    <property type="term" value="P:ATP synthesis coupled electron transport"/>
    <property type="evidence" value="ECO:0007669"/>
    <property type="project" value="InterPro"/>
</dbReference>
<dbReference type="FunFam" id="1.10.287.3510:FF:000002">
    <property type="entry name" value="NADH-ubiquinone oxidoreductase chain 4L"/>
    <property type="match status" value="1"/>
</dbReference>
<dbReference type="Gene3D" id="1.10.287.3510">
    <property type="match status" value="1"/>
</dbReference>
<dbReference type="InterPro" id="IPR001133">
    <property type="entry name" value="NADH_UbQ_OxRdtase_chain4L/K"/>
</dbReference>
<dbReference type="InterPro" id="IPR039428">
    <property type="entry name" value="NUOK/Mnh_C1-like"/>
</dbReference>
<dbReference type="PANTHER" id="PTHR11434:SF0">
    <property type="entry name" value="NADH-UBIQUINONE OXIDOREDUCTASE CHAIN 4L"/>
    <property type="match status" value="1"/>
</dbReference>
<dbReference type="PANTHER" id="PTHR11434">
    <property type="entry name" value="NADH-UBIQUINONE OXIDOREDUCTASE SUBUNIT ND4L"/>
    <property type="match status" value="1"/>
</dbReference>
<dbReference type="Pfam" id="PF00420">
    <property type="entry name" value="Oxidored_q2"/>
    <property type="match status" value="1"/>
</dbReference>
<protein>
    <recommendedName>
        <fullName>NADH-ubiquinone oxidoreductase chain 4L</fullName>
        <ecNumber>7.1.1.2</ecNumber>
    </recommendedName>
    <alternativeName>
        <fullName>NADH dehydrogenase subunit 4L</fullName>
    </alternativeName>
</protein>
<sequence>MSPAVLNITMAFTFSLLGTLMFRSHLMSTLLCLEGMMLSLFMLATITPLNTHSMIMFPIPIAILVFAACEAAVGLALLAKISNTYGSDFVQNLNLLQC</sequence>
<gene>
    <name type="primary">MT-ND4L</name>
    <name type="synonym">MTND4L</name>
    <name type="synonym">NADH4L</name>
    <name type="synonym">ND4L</name>
</gene>
<organism>
    <name type="scientific">Alexandromys kikuchii</name>
    <name type="common">Taiwan vole</name>
    <name type="synonym">Microtus kikuchii</name>
    <dbReference type="NCBI Taxonomy" id="3369700"/>
    <lineage>
        <taxon>Eukaryota</taxon>
        <taxon>Metazoa</taxon>
        <taxon>Chordata</taxon>
        <taxon>Craniata</taxon>
        <taxon>Vertebrata</taxon>
        <taxon>Euteleostomi</taxon>
        <taxon>Mammalia</taxon>
        <taxon>Eutheria</taxon>
        <taxon>Euarchontoglires</taxon>
        <taxon>Glires</taxon>
        <taxon>Rodentia</taxon>
        <taxon>Myomorpha</taxon>
        <taxon>Muroidea</taxon>
        <taxon>Cricetidae</taxon>
        <taxon>Arvicolinae</taxon>
        <taxon>Alexandromys</taxon>
    </lineage>
</organism>
<geneLocation type="mitochondrion"/>
<name>NU4LM_ALEKI</name>
<feature type="chain" id="PRO_0000257867" description="NADH-ubiquinone oxidoreductase chain 4L">
    <location>
        <begin position="1"/>
        <end position="98"/>
    </location>
</feature>
<feature type="transmembrane region" description="Helical" evidence="3">
    <location>
        <begin position="2"/>
        <end position="22"/>
    </location>
</feature>
<feature type="transmembrane region" description="Helical" evidence="3">
    <location>
        <begin position="26"/>
        <end position="46"/>
    </location>
</feature>
<feature type="transmembrane region" description="Helical" evidence="3">
    <location>
        <begin position="59"/>
        <end position="79"/>
    </location>
</feature>
<keyword id="KW-0249">Electron transport</keyword>
<keyword id="KW-0472">Membrane</keyword>
<keyword id="KW-0496">Mitochondrion</keyword>
<keyword id="KW-0999">Mitochondrion inner membrane</keyword>
<keyword id="KW-0520">NAD</keyword>
<keyword id="KW-0679">Respiratory chain</keyword>
<keyword id="KW-1278">Translocase</keyword>
<keyword id="KW-0812">Transmembrane</keyword>
<keyword id="KW-1133">Transmembrane helix</keyword>
<keyword id="KW-0813">Transport</keyword>
<keyword id="KW-0830">Ubiquinone</keyword>
<reference key="1">
    <citation type="journal article" date="2002" name="Gene">
        <title>Pika and vole mitochondrial genomes increase support for both rodent monophyly and glires.</title>
        <authorList>
            <person name="Lin Y.-H."/>
            <person name="Waddell P.J."/>
            <person name="Penny D."/>
        </authorList>
    </citation>
    <scope>NUCLEOTIDE SEQUENCE [GENOMIC DNA]</scope>
</reference>
<accession>Q953H3</accession>
<comment type="function">
    <text evidence="1">Core subunit of the mitochondrial membrane respiratory chain NADH dehydrogenase (Complex I) which catalyzes electron transfer from NADH through the respiratory chain, using ubiquinone as an electron acceptor. Part of the enzyme membrane arm which is embedded in the lipid bilayer and involved in proton translocation.</text>
</comment>
<comment type="catalytic activity">
    <reaction evidence="1">
        <text>a ubiquinone + NADH + 5 H(+)(in) = a ubiquinol + NAD(+) + 4 H(+)(out)</text>
        <dbReference type="Rhea" id="RHEA:29091"/>
        <dbReference type="Rhea" id="RHEA-COMP:9565"/>
        <dbReference type="Rhea" id="RHEA-COMP:9566"/>
        <dbReference type="ChEBI" id="CHEBI:15378"/>
        <dbReference type="ChEBI" id="CHEBI:16389"/>
        <dbReference type="ChEBI" id="CHEBI:17976"/>
        <dbReference type="ChEBI" id="CHEBI:57540"/>
        <dbReference type="ChEBI" id="CHEBI:57945"/>
        <dbReference type="EC" id="7.1.1.2"/>
    </reaction>
    <physiologicalReaction direction="left-to-right" evidence="1">
        <dbReference type="Rhea" id="RHEA:29092"/>
    </physiologicalReaction>
</comment>
<comment type="subunit">
    <text evidence="2">Core subunit of respiratory chain NADH dehydrogenase (Complex I) which is composed of 45 different subunits.</text>
</comment>
<comment type="subcellular location">
    <subcellularLocation>
        <location evidence="2">Mitochondrion inner membrane</location>
        <topology evidence="3">Multi-pass membrane protein</topology>
    </subcellularLocation>
</comment>
<comment type="similarity">
    <text evidence="4">Belongs to the complex I subunit 4L family.</text>
</comment>